<reference key="1">
    <citation type="journal article" date="2004" name="Science">
        <title>The Ashbya gossypii genome as a tool for mapping the ancient Saccharomyces cerevisiae genome.</title>
        <authorList>
            <person name="Dietrich F.S."/>
            <person name="Voegeli S."/>
            <person name="Brachat S."/>
            <person name="Lerch A."/>
            <person name="Gates K."/>
            <person name="Steiner S."/>
            <person name="Mohr C."/>
            <person name="Poehlmann R."/>
            <person name="Luedi P."/>
            <person name="Choi S."/>
            <person name="Wing R.A."/>
            <person name="Flavier A."/>
            <person name="Gaffney T.D."/>
            <person name="Philippsen P."/>
        </authorList>
    </citation>
    <scope>NUCLEOTIDE SEQUENCE [LARGE SCALE GENOMIC DNA]</scope>
    <source>
        <strain>ATCC 10895 / CBS 109.51 / FGSC 9923 / NRRL Y-1056</strain>
    </source>
</reference>
<reference key="2">
    <citation type="journal article" date="2013" name="G3 (Bethesda)">
        <title>Genomes of Ashbya fungi isolated from insects reveal four mating-type loci, numerous translocations, lack of transposons, and distinct gene duplications.</title>
        <authorList>
            <person name="Dietrich F.S."/>
            <person name="Voegeli S."/>
            <person name="Kuo S."/>
            <person name="Philippsen P."/>
        </authorList>
    </citation>
    <scope>GENOME REANNOTATION</scope>
    <source>
        <strain>ATCC 10895 / CBS 109.51 / FGSC 9923 / NRRL Y-1056</strain>
    </source>
</reference>
<organism>
    <name type="scientific">Eremothecium gossypii (strain ATCC 10895 / CBS 109.51 / FGSC 9923 / NRRL Y-1056)</name>
    <name type="common">Yeast</name>
    <name type="synonym">Ashbya gossypii</name>
    <dbReference type="NCBI Taxonomy" id="284811"/>
    <lineage>
        <taxon>Eukaryota</taxon>
        <taxon>Fungi</taxon>
        <taxon>Dikarya</taxon>
        <taxon>Ascomycota</taxon>
        <taxon>Saccharomycotina</taxon>
        <taxon>Saccharomycetes</taxon>
        <taxon>Saccharomycetales</taxon>
        <taxon>Saccharomycetaceae</taxon>
        <taxon>Eremothecium</taxon>
    </lineage>
</organism>
<sequence>MDGQVTVKRHGDTHFANIGYGYYTFGVSVGYILLLLLLRKRRGTAVPRSRHKLFQMMIDGSPALHLPILLLFLEIAFLGHYSVIDHASVYIKRLGRLSYVLLFLNIFLTLRPNYILSDYTYVQLLPMHMWLSRAISTFGVFHGLAFVIKWQLDNEVSLASKLFNLWNLLGFIVWILLIILLITSTGVIRRRSYKSFYMVHQINAFAISFIVPVHARPGVALPYTITIAVLLGLHALARVSFCMSSAVVHKLSNYQKGSKLVRIKLPRNVMPEHFTPGSHIRVSPYRRSNPLYWLVPSHPFTIASLPDDDHVDLILREHGHFEFEVGPRYSIVHNYEGITALQLGLVNRVTIVVGGTGISLGLPLFRYFKENTDIGYLKMIWTVKSHADLHVLDDFEGIDIFVTQNTTTTPIPGASESWDEIPLEEFELNSMDDLEAEEEHLGESGALLPTTKRKKDPGAINIGRRLDWNVELASFVRSEGSSDQLLIVCGPESLVKDGVQFATDHNIVFYKEVYSF</sequence>
<keyword id="KW-0249">Electron transport</keyword>
<keyword id="KW-0274">FAD</keyword>
<keyword id="KW-0285">Flavoprotein</keyword>
<keyword id="KW-0406">Ion transport</keyword>
<keyword id="KW-0472">Membrane</keyword>
<keyword id="KW-0521">NADP</keyword>
<keyword id="KW-0560">Oxidoreductase</keyword>
<keyword id="KW-1185">Reference proteome</keyword>
<keyword id="KW-0812">Transmembrane</keyword>
<keyword id="KW-1133">Transmembrane helix</keyword>
<keyword id="KW-0813">Transport</keyword>
<comment type="function">
    <text evidence="1">Probable cell surface metalloreductase. May be involved in iron or copper homeostasis (By similarity).</text>
</comment>
<comment type="subcellular location">
    <subcellularLocation>
        <location evidence="1">Membrane</location>
        <topology evidence="1">Multi-pass membrane protein</topology>
    </subcellularLocation>
</comment>
<comment type="similarity">
    <text evidence="4">Belongs to the ferric reductase (FRE) family. AIM14 subfamily.</text>
</comment>
<dbReference type="EC" id="1.16.1.-"/>
<dbReference type="EMBL" id="AE016819">
    <property type="protein sequence ID" value="AAS53487.1"/>
    <property type="molecule type" value="Genomic_DNA"/>
</dbReference>
<dbReference type="RefSeq" id="NP_985663.1">
    <property type="nucleotide sequence ID" value="NM_211017.1"/>
</dbReference>
<dbReference type="SMR" id="Q754F4"/>
<dbReference type="FunCoup" id="Q754F4">
    <property type="interactions" value="21"/>
</dbReference>
<dbReference type="EnsemblFungi" id="AAS53487">
    <property type="protein sequence ID" value="AAS53487"/>
    <property type="gene ID" value="AGOS_AFR116W"/>
</dbReference>
<dbReference type="GeneID" id="4621910"/>
<dbReference type="KEGG" id="ago:AGOS_AFR116W"/>
<dbReference type="eggNOG" id="KOG0039">
    <property type="taxonomic scope" value="Eukaryota"/>
</dbReference>
<dbReference type="HOGENOM" id="CLU_036508_0_0_1"/>
<dbReference type="InParanoid" id="Q754F4"/>
<dbReference type="OMA" id="GRMAYCL"/>
<dbReference type="OrthoDB" id="17725at2759"/>
<dbReference type="Proteomes" id="UP000000591">
    <property type="component" value="Chromosome VI"/>
</dbReference>
<dbReference type="GO" id="GO:0097038">
    <property type="term" value="C:perinuclear endoplasmic reticulum"/>
    <property type="evidence" value="ECO:0007669"/>
    <property type="project" value="EnsemblFungi"/>
</dbReference>
<dbReference type="GO" id="GO:0005886">
    <property type="term" value="C:plasma membrane"/>
    <property type="evidence" value="ECO:0000318"/>
    <property type="project" value="GO_Central"/>
</dbReference>
<dbReference type="GO" id="GO:0000293">
    <property type="term" value="F:ferric-chelate reductase activity"/>
    <property type="evidence" value="ECO:0000318"/>
    <property type="project" value="GO_Central"/>
</dbReference>
<dbReference type="GO" id="GO:0016175">
    <property type="term" value="F:superoxide-generating NAD(P)H oxidase activity"/>
    <property type="evidence" value="ECO:0007669"/>
    <property type="project" value="EnsemblFungi"/>
</dbReference>
<dbReference type="GO" id="GO:0006915">
    <property type="term" value="P:apoptotic process"/>
    <property type="evidence" value="ECO:0007669"/>
    <property type="project" value="EnsemblFungi"/>
</dbReference>
<dbReference type="GO" id="GO:0033215">
    <property type="term" value="P:reductive iron assimilation"/>
    <property type="evidence" value="ECO:0000318"/>
    <property type="project" value="GO_Central"/>
</dbReference>
<dbReference type="GO" id="GO:0032956">
    <property type="term" value="P:regulation of actin cytoskeleton organization"/>
    <property type="evidence" value="ECO:0007669"/>
    <property type="project" value="EnsemblFungi"/>
</dbReference>
<dbReference type="CDD" id="cd06186">
    <property type="entry name" value="NOX_Duox_like_FAD_NADP"/>
    <property type="match status" value="1"/>
</dbReference>
<dbReference type="Gene3D" id="3.40.50.80">
    <property type="entry name" value="Nucleotide-binding domain of ferredoxin-NADP reductase (FNR) module"/>
    <property type="match status" value="1"/>
</dbReference>
<dbReference type="InterPro" id="IPR013112">
    <property type="entry name" value="FAD-bd_8"/>
</dbReference>
<dbReference type="InterPro" id="IPR017927">
    <property type="entry name" value="FAD-bd_FR_type"/>
</dbReference>
<dbReference type="InterPro" id="IPR013130">
    <property type="entry name" value="Fe3_Rdtase_TM_dom"/>
</dbReference>
<dbReference type="InterPro" id="IPR013121">
    <property type="entry name" value="Fe_red_NAD-bd_6"/>
</dbReference>
<dbReference type="InterPro" id="IPR039261">
    <property type="entry name" value="FNR_nucleotide-bd"/>
</dbReference>
<dbReference type="InterPro" id="IPR050369">
    <property type="entry name" value="RBOH/FRE"/>
</dbReference>
<dbReference type="InterPro" id="IPR017938">
    <property type="entry name" value="Riboflavin_synthase-like_b-brl"/>
</dbReference>
<dbReference type="PANTHER" id="PTHR11972:SF198">
    <property type="entry name" value="METALLOREDUCTASE AIM14-RELATED"/>
    <property type="match status" value="1"/>
</dbReference>
<dbReference type="PANTHER" id="PTHR11972">
    <property type="entry name" value="NADPH OXIDASE"/>
    <property type="match status" value="1"/>
</dbReference>
<dbReference type="Pfam" id="PF08022">
    <property type="entry name" value="FAD_binding_8"/>
    <property type="match status" value="1"/>
</dbReference>
<dbReference type="Pfam" id="PF01794">
    <property type="entry name" value="Ferric_reduct"/>
    <property type="match status" value="1"/>
</dbReference>
<dbReference type="Pfam" id="PF08030">
    <property type="entry name" value="NAD_binding_6"/>
    <property type="match status" value="1"/>
</dbReference>
<dbReference type="SFLD" id="SFLDF00463">
    <property type="entry name" value="AIM14"/>
    <property type="match status" value="1"/>
</dbReference>
<dbReference type="SFLD" id="SFLDS00052">
    <property type="entry name" value="Ferric_Reductase_Domain"/>
    <property type="match status" value="1"/>
</dbReference>
<dbReference type="SFLD" id="SFLDG01168">
    <property type="entry name" value="Ferric_reductase_subgroup_(FRE"/>
    <property type="match status" value="1"/>
</dbReference>
<dbReference type="SUPFAM" id="SSF52343">
    <property type="entry name" value="Ferredoxin reductase-like, C-terminal NADP-linked domain"/>
    <property type="match status" value="1"/>
</dbReference>
<dbReference type="SUPFAM" id="SSF63380">
    <property type="entry name" value="Riboflavin synthase domain-like"/>
    <property type="match status" value="1"/>
</dbReference>
<dbReference type="PROSITE" id="PS51384">
    <property type="entry name" value="FAD_FR"/>
    <property type="match status" value="1"/>
</dbReference>
<protein>
    <recommendedName>
        <fullName>Probable metalloreductase AIM14</fullName>
        <ecNumber>1.16.1.-</ecNumber>
    </recommendedName>
</protein>
<name>AIM14_EREGS</name>
<proteinExistence type="inferred from homology"/>
<gene>
    <name type="primary">AIM14</name>
    <name type="ordered locus">AFR116W</name>
</gene>
<feature type="chain" id="PRO_0000408740" description="Probable metalloreductase AIM14">
    <location>
        <begin position="1"/>
        <end position="516"/>
    </location>
</feature>
<feature type="transmembrane region" description="Helical" evidence="2">
    <location>
        <begin position="18"/>
        <end position="38"/>
    </location>
</feature>
<feature type="transmembrane region" description="Helical" evidence="2">
    <location>
        <begin position="64"/>
        <end position="84"/>
    </location>
</feature>
<feature type="transmembrane region" description="Helical" evidence="2">
    <location>
        <begin position="97"/>
        <end position="117"/>
    </location>
</feature>
<feature type="transmembrane region" description="Helical" evidence="2">
    <location>
        <begin position="128"/>
        <end position="148"/>
    </location>
</feature>
<feature type="transmembrane region" description="Helical" evidence="2">
    <location>
        <begin position="168"/>
        <end position="188"/>
    </location>
</feature>
<feature type="transmembrane region" description="Helical" evidence="2">
    <location>
        <begin position="195"/>
        <end position="215"/>
    </location>
</feature>
<feature type="transmembrane region" description="Helical" evidence="2">
    <location>
        <begin position="217"/>
        <end position="237"/>
    </location>
</feature>
<feature type="domain" description="Ferric oxidoreductase">
    <location>
        <begin position="94"/>
        <end position="207"/>
    </location>
</feature>
<feature type="domain" description="FAD-binding FR-type" evidence="3">
    <location>
        <begin position="238"/>
        <end position="363"/>
    </location>
</feature>
<evidence type="ECO:0000250" key="1"/>
<evidence type="ECO:0000255" key="2"/>
<evidence type="ECO:0000255" key="3">
    <source>
        <dbReference type="PROSITE-ProRule" id="PRU00716"/>
    </source>
</evidence>
<evidence type="ECO:0000305" key="4"/>
<accession>Q754F4</accession>